<dbReference type="SMR" id="P81110"/>
<dbReference type="Gene3D" id="3.40.30.10">
    <property type="entry name" value="Glutaredoxin"/>
    <property type="match status" value="1"/>
</dbReference>
<dbReference type="InterPro" id="IPR036249">
    <property type="entry name" value="Thioredoxin-like_sf"/>
</dbReference>
<dbReference type="InterPro" id="IPR013766">
    <property type="entry name" value="Thioredoxin_domain"/>
</dbReference>
<dbReference type="Pfam" id="PF00085">
    <property type="entry name" value="Thioredoxin"/>
    <property type="match status" value="1"/>
</dbReference>
<dbReference type="SUPFAM" id="SSF52833">
    <property type="entry name" value="Thioredoxin-like"/>
    <property type="match status" value="1"/>
</dbReference>
<organism>
    <name type="scientific">Tissierella creatinophila</name>
    <dbReference type="NCBI Taxonomy" id="79681"/>
    <lineage>
        <taxon>Bacteria</taxon>
        <taxon>Bacillati</taxon>
        <taxon>Bacillota</taxon>
        <taxon>Tissierellia</taxon>
        <taxon>Tissierellales</taxon>
        <taxon>Tissierellaceae</taxon>
        <taxon>Tissierella</taxon>
    </lineage>
</organism>
<reference key="1">
    <citation type="journal article" date="1998" name="Microbiology">
        <title>Fast purification of thioredoxin reductases and of thioredoxins with an unusual redox-active centre from anaerobic, amino-acid-utilizing bacteria.</title>
        <authorList>
            <person name="Harms C."/>
            <person name="Meyer M.A."/>
            <person name="Andreesen J.R."/>
        </authorList>
    </citation>
    <scope>PROTEIN SEQUENCE</scope>
    <source>
        <strain>DSM 6911 / KRE 4</strain>
    </source>
</reference>
<proteinExistence type="evidence at protein level"/>
<accession>P81110</accession>
<comment type="function">
    <text>Participates in various redox reactions through the reversible oxidation of its active center dithiol to a disulfide and catalyzes dithiol-disulfide exchange reactions.</text>
</comment>
<comment type="similarity">
    <text evidence="2">Belongs to the thioredoxin family.</text>
</comment>
<sequence>MIELDKSNFEEEVLKAEGTVLVDFWSPSCEPCKALMPHVHDFEE</sequence>
<name>THIO_TISCR</name>
<protein>
    <recommendedName>
        <fullName>Thioredoxin</fullName>
        <shortName>Trx</shortName>
    </recommendedName>
</protein>
<evidence type="ECO:0000255" key="1">
    <source>
        <dbReference type="PROSITE-ProRule" id="PRU00691"/>
    </source>
</evidence>
<evidence type="ECO:0000305" key="2"/>
<keyword id="KW-0903">Direct protein sequencing</keyword>
<keyword id="KW-1015">Disulfide bond</keyword>
<keyword id="KW-0249">Electron transport</keyword>
<keyword id="KW-0676">Redox-active center</keyword>
<keyword id="KW-0813">Transport</keyword>
<gene>
    <name type="primary">trxA</name>
</gene>
<feature type="chain" id="PRO_0000120143" description="Thioredoxin">
    <location>
        <begin position="1"/>
        <end position="44" status="greater than"/>
    </location>
</feature>
<feature type="domain" description="Thioredoxin" evidence="1">
    <location>
        <begin position="2"/>
        <end position="44" status="greater than"/>
    </location>
</feature>
<feature type="disulfide bond" description="Redox-active" evidence="1">
    <location>
        <begin position="29"/>
        <end position="32"/>
    </location>
</feature>
<feature type="non-terminal residue">
    <location>
        <position position="44"/>
    </location>
</feature>